<name>P6_TNVD</name>
<feature type="chain" id="PRO_0000222903" description="Uncharacterized protein p6">
    <location>
        <begin position="1"/>
        <end position="66"/>
    </location>
</feature>
<feature type="transmembrane region" description="Helical" evidence="1">
    <location>
        <begin position="11"/>
        <end position="31"/>
    </location>
</feature>
<proteinExistence type="predicted"/>
<gene>
    <name type="ORF">ORF3</name>
</gene>
<keyword id="KW-0472">Membrane</keyword>
<keyword id="KW-0812">Transmembrane</keyword>
<keyword id="KW-1133">Transmembrane helix</keyword>
<dbReference type="EMBL" id="D00942">
    <property type="protein sequence ID" value="BAA00789.1"/>
    <property type="molecule type" value="Genomic_RNA"/>
</dbReference>
<dbReference type="PIR" id="JU0370">
    <property type="entry name" value="WMWQTT"/>
</dbReference>
<dbReference type="SMR" id="P27212"/>
<dbReference type="GO" id="GO:0016020">
    <property type="term" value="C:membrane"/>
    <property type="evidence" value="ECO:0007669"/>
    <property type="project" value="UniProtKB-SubCell"/>
</dbReference>
<protein>
    <recommendedName>
        <fullName>Uncharacterized protein p6</fullName>
    </recommendedName>
</protein>
<organismHost>
    <name type="scientific">Chenopodium amaranticolor</name>
    <dbReference type="NCBI Taxonomy" id="66262"/>
</organismHost>
<organismHost>
    <name type="scientific">Chenopodium quinoa</name>
    <name type="common">Quinoa</name>
    <dbReference type="NCBI Taxonomy" id="63459"/>
</organismHost>
<organismHost>
    <name type="scientific">Cucumis sativus</name>
    <name type="common">Cucumber</name>
    <dbReference type="NCBI Taxonomy" id="3659"/>
</organismHost>
<organismHost>
    <name type="scientific">Nicotiana clevelandii</name>
    <name type="common">Wild tobacco</name>
    <dbReference type="NCBI Taxonomy" id="81866"/>
</organismHost>
<organismHost>
    <name type="scientific">Nicotiana tabacum</name>
    <name type="common">Common tobacco</name>
    <dbReference type="NCBI Taxonomy" id="4097"/>
</organismHost>
<organismHost>
    <name type="scientific">Phaseolus vulgaris</name>
    <name type="common">Kidney bean</name>
    <name type="synonym">French bean</name>
    <dbReference type="NCBI Taxonomy" id="3885"/>
</organismHost>
<organismHost>
    <name type="scientific">Tulipa gesneriana</name>
    <name type="common">Garden tulip</name>
    <dbReference type="NCBI Taxonomy" id="13306"/>
</organismHost>
<evidence type="ECO:0000255" key="1"/>
<evidence type="ECO:0000305" key="2"/>
<comment type="subcellular location">
    <subcellularLocation>
        <location evidence="2">Membrane</location>
        <topology evidence="2">Single-pass membrane protein</topology>
    </subcellularLocation>
</comment>
<organism>
    <name type="scientific">Tobacco necrosis virus (strain D)</name>
    <name type="common">TNV-D</name>
    <dbReference type="NCBI Taxonomy" id="12056"/>
    <lineage>
        <taxon>Viruses</taxon>
        <taxon>Riboviria</taxon>
        <taxon>Orthornavirae</taxon>
        <taxon>Kitrinoviricota</taxon>
        <taxon>Tolucaviricetes</taxon>
        <taxon>Tolivirales</taxon>
        <taxon>Tombusviridae</taxon>
        <taxon>Procedovirinae</taxon>
        <taxon>Betanecrovirus</taxon>
        <taxon>Betanecrovirus nicotianae</taxon>
    </lineage>
</organism>
<reference key="1">
    <citation type="journal article" date="1991" name="J. Gen. Virol.">
        <title>The complete nucleotide sequence of tobacco necrosis virus strain D.</title>
        <authorList>
            <person name="Coutts R.H.A."/>
            <person name="Rigden J.E."/>
            <person name="Slabas A.R."/>
            <person name="Lomonossoff G.P."/>
            <person name="Wise P.J."/>
        </authorList>
    </citation>
    <scope>NUCLEOTIDE SEQUENCE [GENOMIC RNA]</scope>
</reference>
<sequence>MAYIIVHQRDPFPLLGVWIIVIIIVAVIGLLNQSPPERPYQTFKEDNSKIQYITIGGSTTTKVSTS</sequence>
<accession>P27212</accession>